<sequence length="396" mass="42769">MSTLKLNPYFGEYGGMYVPQILVPALKQLETAFVEAQEDDDFKAEFTDLLKNYAGRPTALTLTRNLSPNPMVKIYLKREDLLHGGAHKTNQVLGQALLAKRMGKKEIIAETGAGQHGVATALACALLGLKCKVYMGAKDVARQSPNVFRMRLMGAEVIPVTSGSATLKDACNEAMRDWSGSYEKAHYLLGTAAGPHPFPTIVREFQRIIGEETKKQMLEREGRLPDAVIACVGGGSNAIGMFADFIDEPSVELIGVEPAGKGIDTPMHGAPLKHGKTGIFFGMKAPLMQDSEGQIEESYSISAGLDFPSVGPQHAHLNATGRARYESATDDEALEAFQQLARCEGIIPALESAHAIAYAVKMARECTKETILVVNLSGRGDKDIFTVSDILNGKEV</sequence>
<dbReference type="EC" id="4.2.1.20" evidence="1"/>
<dbReference type="EMBL" id="CP000503">
    <property type="protein sequence ID" value="ABM24438.1"/>
    <property type="molecule type" value="Genomic_DNA"/>
</dbReference>
<dbReference type="RefSeq" id="WP_011788938.1">
    <property type="nucleotide sequence ID" value="NC_008750.1"/>
</dbReference>
<dbReference type="SMR" id="A1RIE3"/>
<dbReference type="KEGG" id="shw:Sputw3181_1601"/>
<dbReference type="HOGENOM" id="CLU_016734_3_1_6"/>
<dbReference type="UniPathway" id="UPA00035">
    <property type="reaction ID" value="UER00044"/>
</dbReference>
<dbReference type="Proteomes" id="UP000002597">
    <property type="component" value="Chromosome"/>
</dbReference>
<dbReference type="GO" id="GO:0005737">
    <property type="term" value="C:cytoplasm"/>
    <property type="evidence" value="ECO:0007669"/>
    <property type="project" value="TreeGrafter"/>
</dbReference>
<dbReference type="GO" id="GO:0004834">
    <property type="term" value="F:tryptophan synthase activity"/>
    <property type="evidence" value="ECO:0007669"/>
    <property type="project" value="UniProtKB-UniRule"/>
</dbReference>
<dbReference type="CDD" id="cd06446">
    <property type="entry name" value="Trp-synth_B"/>
    <property type="match status" value="1"/>
</dbReference>
<dbReference type="FunFam" id="3.40.50.1100:FF:000001">
    <property type="entry name" value="Tryptophan synthase beta chain"/>
    <property type="match status" value="1"/>
</dbReference>
<dbReference type="FunFam" id="3.40.50.1100:FF:000004">
    <property type="entry name" value="Tryptophan synthase beta chain"/>
    <property type="match status" value="1"/>
</dbReference>
<dbReference type="Gene3D" id="3.40.50.1100">
    <property type="match status" value="2"/>
</dbReference>
<dbReference type="HAMAP" id="MF_00133">
    <property type="entry name" value="Trp_synth_beta"/>
    <property type="match status" value="1"/>
</dbReference>
<dbReference type="InterPro" id="IPR006653">
    <property type="entry name" value="Trp_synth_b_CS"/>
</dbReference>
<dbReference type="InterPro" id="IPR006654">
    <property type="entry name" value="Trp_synth_beta"/>
</dbReference>
<dbReference type="InterPro" id="IPR023026">
    <property type="entry name" value="Trp_synth_beta/beta-like"/>
</dbReference>
<dbReference type="InterPro" id="IPR001926">
    <property type="entry name" value="TrpB-like_PALP"/>
</dbReference>
<dbReference type="InterPro" id="IPR036052">
    <property type="entry name" value="TrpB-like_PALP_sf"/>
</dbReference>
<dbReference type="NCBIfam" id="TIGR00263">
    <property type="entry name" value="trpB"/>
    <property type="match status" value="1"/>
</dbReference>
<dbReference type="PANTHER" id="PTHR48077:SF3">
    <property type="entry name" value="TRYPTOPHAN SYNTHASE"/>
    <property type="match status" value="1"/>
</dbReference>
<dbReference type="PANTHER" id="PTHR48077">
    <property type="entry name" value="TRYPTOPHAN SYNTHASE-RELATED"/>
    <property type="match status" value="1"/>
</dbReference>
<dbReference type="Pfam" id="PF00291">
    <property type="entry name" value="PALP"/>
    <property type="match status" value="1"/>
</dbReference>
<dbReference type="PIRSF" id="PIRSF001413">
    <property type="entry name" value="Trp_syn_beta"/>
    <property type="match status" value="1"/>
</dbReference>
<dbReference type="SUPFAM" id="SSF53686">
    <property type="entry name" value="Tryptophan synthase beta subunit-like PLP-dependent enzymes"/>
    <property type="match status" value="1"/>
</dbReference>
<dbReference type="PROSITE" id="PS00168">
    <property type="entry name" value="TRP_SYNTHASE_BETA"/>
    <property type="match status" value="1"/>
</dbReference>
<protein>
    <recommendedName>
        <fullName evidence="1">Tryptophan synthase beta chain</fullName>
        <ecNumber evidence="1">4.2.1.20</ecNumber>
    </recommendedName>
</protein>
<reference key="1">
    <citation type="submission" date="2006-12" db="EMBL/GenBank/DDBJ databases">
        <title>Complete sequence of Shewanella sp. W3-18-1.</title>
        <authorList>
            <consortium name="US DOE Joint Genome Institute"/>
            <person name="Copeland A."/>
            <person name="Lucas S."/>
            <person name="Lapidus A."/>
            <person name="Barry K."/>
            <person name="Detter J.C."/>
            <person name="Glavina del Rio T."/>
            <person name="Hammon N."/>
            <person name="Israni S."/>
            <person name="Dalin E."/>
            <person name="Tice H."/>
            <person name="Pitluck S."/>
            <person name="Chain P."/>
            <person name="Malfatti S."/>
            <person name="Shin M."/>
            <person name="Vergez L."/>
            <person name="Schmutz J."/>
            <person name="Larimer F."/>
            <person name="Land M."/>
            <person name="Hauser L."/>
            <person name="Kyrpides N."/>
            <person name="Lykidis A."/>
            <person name="Tiedje J."/>
            <person name="Richardson P."/>
        </authorList>
    </citation>
    <scope>NUCLEOTIDE SEQUENCE [LARGE SCALE GENOMIC DNA]</scope>
    <source>
        <strain>W3-18-1</strain>
    </source>
</reference>
<feature type="chain" id="PRO_1000018395" description="Tryptophan synthase beta chain">
    <location>
        <begin position="1"/>
        <end position="396"/>
    </location>
</feature>
<feature type="modified residue" description="N6-(pyridoxal phosphate)lysine" evidence="1">
    <location>
        <position position="88"/>
    </location>
</feature>
<accession>A1RIE3</accession>
<comment type="function">
    <text evidence="1">The beta subunit is responsible for the synthesis of L-tryptophan from indole and L-serine.</text>
</comment>
<comment type="catalytic activity">
    <reaction evidence="1">
        <text>(1S,2R)-1-C-(indol-3-yl)glycerol 3-phosphate + L-serine = D-glyceraldehyde 3-phosphate + L-tryptophan + H2O</text>
        <dbReference type="Rhea" id="RHEA:10532"/>
        <dbReference type="ChEBI" id="CHEBI:15377"/>
        <dbReference type="ChEBI" id="CHEBI:33384"/>
        <dbReference type="ChEBI" id="CHEBI:57912"/>
        <dbReference type="ChEBI" id="CHEBI:58866"/>
        <dbReference type="ChEBI" id="CHEBI:59776"/>
        <dbReference type="EC" id="4.2.1.20"/>
    </reaction>
</comment>
<comment type="cofactor">
    <cofactor evidence="1">
        <name>pyridoxal 5'-phosphate</name>
        <dbReference type="ChEBI" id="CHEBI:597326"/>
    </cofactor>
</comment>
<comment type="pathway">
    <text evidence="1">Amino-acid biosynthesis; L-tryptophan biosynthesis; L-tryptophan from chorismate: step 5/5.</text>
</comment>
<comment type="subunit">
    <text evidence="1">Tetramer of two alpha and two beta chains.</text>
</comment>
<comment type="similarity">
    <text evidence="1">Belongs to the TrpB family.</text>
</comment>
<gene>
    <name evidence="1" type="primary">trpB</name>
    <name type="ordered locus">Sputw3181_1601</name>
</gene>
<organism>
    <name type="scientific">Shewanella sp. (strain W3-18-1)</name>
    <dbReference type="NCBI Taxonomy" id="351745"/>
    <lineage>
        <taxon>Bacteria</taxon>
        <taxon>Pseudomonadati</taxon>
        <taxon>Pseudomonadota</taxon>
        <taxon>Gammaproteobacteria</taxon>
        <taxon>Alteromonadales</taxon>
        <taxon>Shewanellaceae</taxon>
        <taxon>Shewanella</taxon>
    </lineage>
</organism>
<proteinExistence type="inferred from homology"/>
<keyword id="KW-0028">Amino-acid biosynthesis</keyword>
<keyword id="KW-0057">Aromatic amino acid biosynthesis</keyword>
<keyword id="KW-0456">Lyase</keyword>
<keyword id="KW-0663">Pyridoxal phosphate</keyword>
<keyword id="KW-0822">Tryptophan biosynthesis</keyword>
<evidence type="ECO:0000255" key="1">
    <source>
        <dbReference type="HAMAP-Rule" id="MF_00133"/>
    </source>
</evidence>
<name>TRPB_SHESW</name>